<reference key="1">
    <citation type="journal article" date="2003" name="Nature">
        <title>Genome divergence in two Prochlorococcus ecotypes reflects oceanic niche differentiation.</title>
        <authorList>
            <person name="Rocap G."/>
            <person name="Larimer F.W."/>
            <person name="Lamerdin J.E."/>
            <person name="Malfatti S."/>
            <person name="Chain P."/>
            <person name="Ahlgren N.A."/>
            <person name="Arellano A."/>
            <person name="Coleman M."/>
            <person name="Hauser L."/>
            <person name="Hess W.R."/>
            <person name="Johnson Z.I."/>
            <person name="Land M.L."/>
            <person name="Lindell D."/>
            <person name="Post A.F."/>
            <person name="Regala W."/>
            <person name="Shah M."/>
            <person name="Shaw S.L."/>
            <person name="Steglich C."/>
            <person name="Sullivan M.B."/>
            <person name="Ting C.S."/>
            <person name="Tolonen A."/>
            <person name="Webb E.A."/>
            <person name="Zinser E.R."/>
            <person name="Chisholm S.W."/>
        </authorList>
    </citation>
    <scope>NUCLEOTIDE SEQUENCE [LARGE SCALE GENOMIC DNA]</scope>
    <source>
        <strain>MIT 9313</strain>
    </source>
</reference>
<name>PSBH_PROMM</name>
<accession>Q7V4V2</accession>
<organism>
    <name type="scientific">Prochlorococcus marinus (strain MIT 9313)</name>
    <dbReference type="NCBI Taxonomy" id="74547"/>
    <lineage>
        <taxon>Bacteria</taxon>
        <taxon>Bacillati</taxon>
        <taxon>Cyanobacteriota</taxon>
        <taxon>Cyanophyceae</taxon>
        <taxon>Synechococcales</taxon>
        <taxon>Prochlorococcaceae</taxon>
        <taxon>Prochlorococcus</taxon>
    </lineage>
</organism>
<keyword id="KW-0472">Membrane</keyword>
<keyword id="KW-0602">Photosynthesis</keyword>
<keyword id="KW-0604">Photosystem II</keyword>
<keyword id="KW-1185">Reference proteome</keyword>
<keyword id="KW-0793">Thylakoid</keyword>
<keyword id="KW-0812">Transmembrane</keyword>
<keyword id="KW-1133">Transmembrane helix</keyword>
<protein>
    <recommendedName>
        <fullName evidence="1">Photosystem II reaction center protein H</fullName>
        <shortName evidence="1">PSII-H</shortName>
    </recommendedName>
</protein>
<sequence length="62" mass="6696">MAQSTRLGNLIKSLPGYAPGKVVPGWGTTPVMAGIGFMLLIFLVTILQIYNQSLLLQSISFE</sequence>
<dbReference type="EMBL" id="BX548175">
    <property type="protein sequence ID" value="CAE22012.1"/>
    <property type="molecule type" value="Genomic_DNA"/>
</dbReference>
<dbReference type="RefSeq" id="WP_011131204.1">
    <property type="nucleotide sequence ID" value="NC_005071.1"/>
</dbReference>
<dbReference type="SMR" id="Q7V4V2"/>
<dbReference type="KEGG" id="pmt:PMT_1837"/>
<dbReference type="eggNOG" id="ENOG50332MV">
    <property type="taxonomic scope" value="Bacteria"/>
</dbReference>
<dbReference type="HOGENOM" id="CLU_190203_0_0_3"/>
<dbReference type="OrthoDB" id="427121at2"/>
<dbReference type="Proteomes" id="UP000001423">
    <property type="component" value="Chromosome"/>
</dbReference>
<dbReference type="GO" id="GO:0009523">
    <property type="term" value="C:photosystem II"/>
    <property type="evidence" value="ECO:0007669"/>
    <property type="project" value="UniProtKB-KW"/>
</dbReference>
<dbReference type="GO" id="GO:0031676">
    <property type="term" value="C:plasma membrane-derived thylakoid membrane"/>
    <property type="evidence" value="ECO:0007669"/>
    <property type="project" value="UniProtKB-SubCell"/>
</dbReference>
<dbReference type="GO" id="GO:0042301">
    <property type="term" value="F:phosphate ion binding"/>
    <property type="evidence" value="ECO:0007669"/>
    <property type="project" value="InterPro"/>
</dbReference>
<dbReference type="GO" id="GO:0015979">
    <property type="term" value="P:photosynthesis"/>
    <property type="evidence" value="ECO:0007669"/>
    <property type="project" value="UniProtKB-UniRule"/>
</dbReference>
<dbReference type="GO" id="GO:0050821">
    <property type="term" value="P:protein stabilization"/>
    <property type="evidence" value="ECO:0007669"/>
    <property type="project" value="InterPro"/>
</dbReference>
<dbReference type="Gene3D" id="1.20.5.880">
    <property type="entry name" value="Photosystem II reaction center protein H"/>
    <property type="match status" value="1"/>
</dbReference>
<dbReference type="HAMAP" id="MF_00752">
    <property type="entry name" value="PSII_PsbH"/>
    <property type="match status" value="1"/>
</dbReference>
<dbReference type="InterPro" id="IPR001056">
    <property type="entry name" value="PSII_PsbH"/>
</dbReference>
<dbReference type="InterPro" id="IPR036863">
    <property type="entry name" value="PSII_PsbH_sf"/>
</dbReference>
<dbReference type="NCBIfam" id="NF002728">
    <property type="entry name" value="PRK02624.1"/>
    <property type="match status" value="1"/>
</dbReference>
<dbReference type="PANTHER" id="PTHR34469">
    <property type="entry name" value="PHOTOSYSTEM II REACTION CENTER PROTEIN H"/>
    <property type="match status" value="1"/>
</dbReference>
<dbReference type="PANTHER" id="PTHR34469:SF4">
    <property type="entry name" value="PHOTOSYSTEM II REACTION CENTER PROTEIN H"/>
    <property type="match status" value="1"/>
</dbReference>
<dbReference type="Pfam" id="PF00737">
    <property type="entry name" value="PsbH"/>
    <property type="match status" value="1"/>
</dbReference>
<dbReference type="SUPFAM" id="SSF161025">
    <property type="entry name" value="Photosystem II 10 kDa phosphoprotein PsbH"/>
    <property type="match status" value="1"/>
</dbReference>
<feature type="chain" id="PRO_0000070544" description="Photosystem II reaction center protein H">
    <location>
        <begin position="1"/>
        <end position="62"/>
    </location>
</feature>
<feature type="transmembrane region" description="Helical" evidence="1">
    <location>
        <begin position="30"/>
        <end position="50"/>
    </location>
</feature>
<proteinExistence type="inferred from homology"/>
<evidence type="ECO:0000255" key="1">
    <source>
        <dbReference type="HAMAP-Rule" id="MF_00752"/>
    </source>
</evidence>
<evidence type="ECO:0000305" key="2"/>
<comment type="function">
    <text evidence="1">One of the components of the core complex of photosystem II (PSII), required for its stability and/or assembly. PSII is a light-driven water:plastoquinone oxidoreductase that uses light energy to abstract electrons from H(2)O, generating O(2) and a proton gradient subsequently used for ATP formation. It consists of a core antenna complex that captures photons, and an electron transfer chain that converts photonic excitation into a charge separation.</text>
</comment>
<comment type="subunit">
    <text evidence="2">PSII is composed of 1 copy each of membrane proteins PsbA, PsbB, PsbC, PsbD, PsbE, PsbF, PsbH, PsbI, PsbJ, PsbK, PsbL, PsbM, PsbT, PsbX, PsbY, Psb30/Ycf12, peripheral proteins PsbO, CyanoQ (PsbQ), PsbU, PsbV and a large number of cofactors. It forms dimeric complexes.</text>
</comment>
<comment type="subcellular location">
    <subcellularLocation>
        <location evidence="1">Cellular thylakoid membrane</location>
        <topology evidence="1">Single-pass membrane protein</topology>
    </subcellularLocation>
</comment>
<comment type="similarity">
    <text evidence="1">Belongs to the PsbH family.</text>
</comment>
<gene>
    <name evidence="1" type="primary">psbH</name>
    <name type="ordered locus">PMT_1837</name>
</gene>